<feature type="peptide" id="PRO_0000378768" description="Periviscerokinin-1" evidence="2">
    <location>
        <begin position="1"/>
        <end position="11"/>
    </location>
</feature>
<feature type="modified residue" description="Asparagine amide" evidence="2">
    <location>
        <position position="11"/>
    </location>
</feature>
<evidence type="ECO:0000255" key="1"/>
<evidence type="ECO:0000269" key="2">
    <source>
    </source>
</evidence>
<evidence type="ECO:0000303" key="3">
    <source>
    </source>
</evidence>
<evidence type="ECO:0000305" key="4"/>
<sequence length="11" mass="1114">GASGLIPVMRN</sequence>
<dbReference type="GO" id="GO:0005576">
    <property type="term" value="C:extracellular region"/>
    <property type="evidence" value="ECO:0007669"/>
    <property type="project" value="UniProtKB-SubCell"/>
</dbReference>
<dbReference type="GO" id="GO:0007218">
    <property type="term" value="P:neuropeptide signaling pathway"/>
    <property type="evidence" value="ECO:0007669"/>
    <property type="project" value="UniProtKB-KW"/>
</dbReference>
<reference evidence="4" key="1">
    <citation type="journal article" date="2009" name="BMC Evol. Biol.">
        <title>A proteomic approach for studying insect phylogeny: CAPA peptides of ancient insect taxa (Dictyoptera, Blattoptera) as a test case.</title>
        <authorList>
            <person name="Roth S."/>
            <person name="Fromm B."/>
            <person name="Gaede G."/>
            <person name="Predel R."/>
        </authorList>
    </citation>
    <scope>PROTEIN SEQUENCE</scope>
    <scope>AMIDATION AT ASN-11</scope>
    <source>
        <tissue evidence="2">Abdominal perisympathetic organs</tissue>
    </source>
</reference>
<protein>
    <recommendedName>
        <fullName evidence="3">Periviscerokinin-1</fullName>
        <shortName evidence="3">PseFl-PVK-1</shortName>
    </recommendedName>
</protein>
<organism>
    <name type="scientific">Pseudoderopeltis flavescens</name>
    <name type="common">Cockroach</name>
    <dbReference type="NCBI Taxonomy" id="303916"/>
    <lineage>
        <taxon>Eukaryota</taxon>
        <taxon>Metazoa</taxon>
        <taxon>Ecdysozoa</taxon>
        <taxon>Arthropoda</taxon>
        <taxon>Hexapoda</taxon>
        <taxon>Insecta</taxon>
        <taxon>Pterygota</taxon>
        <taxon>Neoptera</taxon>
        <taxon>Polyneoptera</taxon>
        <taxon>Dictyoptera</taxon>
        <taxon>Blattodea</taxon>
        <taxon>Blattoidea</taxon>
        <taxon>Blattidae</taxon>
        <taxon>Blattinae</taxon>
        <taxon>Pseudoderopeltis</taxon>
    </lineage>
</organism>
<accession>P85754</accession>
<keyword id="KW-0027">Amidation</keyword>
<keyword id="KW-0903">Direct protein sequencing</keyword>
<keyword id="KW-0527">Neuropeptide</keyword>
<keyword id="KW-0964">Secreted</keyword>
<name>PVK1_PSEFV</name>
<comment type="function">
    <text evidence="4">Mediates visceral muscle contractile activity (myotropic activity).</text>
</comment>
<comment type="subcellular location">
    <subcellularLocation>
        <location evidence="4">Secreted</location>
    </subcellularLocation>
</comment>
<comment type="similarity">
    <text evidence="1">Belongs to the periviscerokinin family.</text>
</comment>
<proteinExistence type="evidence at protein level"/>